<name>RL17_PEDPA</name>
<evidence type="ECO:0000255" key="1">
    <source>
        <dbReference type="HAMAP-Rule" id="MF_01368"/>
    </source>
</evidence>
<evidence type="ECO:0000305" key="2"/>
<feature type="chain" id="PRO_1000055902" description="Large ribosomal subunit protein bL17">
    <location>
        <begin position="1"/>
        <end position="127"/>
    </location>
</feature>
<dbReference type="EMBL" id="CP000422">
    <property type="protein sequence ID" value="ABJ68429.1"/>
    <property type="molecule type" value="Genomic_DNA"/>
</dbReference>
<dbReference type="RefSeq" id="WP_002833353.1">
    <property type="nucleotide sequence ID" value="NC_008525.1"/>
</dbReference>
<dbReference type="SMR" id="Q03EE3"/>
<dbReference type="STRING" id="278197.PEPE_1391"/>
<dbReference type="GeneID" id="33061257"/>
<dbReference type="KEGG" id="ppe:PEPE_1391"/>
<dbReference type="eggNOG" id="COG0203">
    <property type="taxonomic scope" value="Bacteria"/>
</dbReference>
<dbReference type="HOGENOM" id="CLU_074407_2_2_9"/>
<dbReference type="OrthoDB" id="9809073at2"/>
<dbReference type="Proteomes" id="UP000000773">
    <property type="component" value="Chromosome"/>
</dbReference>
<dbReference type="GO" id="GO:0022625">
    <property type="term" value="C:cytosolic large ribosomal subunit"/>
    <property type="evidence" value="ECO:0007669"/>
    <property type="project" value="TreeGrafter"/>
</dbReference>
<dbReference type="GO" id="GO:0003735">
    <property type="term" value="F:structural constituent of ribosome"/>
    <property type="evidence" value="ECO:0007669"/>
    <property type="project" value="InterPro"/>
</dbReference>
<dbReference type="GO" id="GO:0006412">
    <property type="term" value="P:translation"/>
    <property type="evidence" value="ECO:0007669"/>
    <property type="project" value="UniProtKB-UniRule"/>
</dbReference>
<dbReference type="FunFam" id="3.90.1030.10:FF:000002">
    <property type="entry name" value="50S ribosomal protein L17"/>
    <property type="match status" value="1"/>
</dbReference>
<dbReference type="Gene3D" id="3.90.1030.10">
    <property type="entry name" value="Ribosomal protein L17"/>
    <property type="match status" value="1"/>
</dbReference>
<dbReference type="HAMAP" id="MF_01368">
    <property type="entry name" value="Ribosomal_bL17"/>
    <property type="match status" value="1"/>
</dbReference>
<dbReference type="InterPro" id="IPR000456">
    <property type="entry name" value="Ribosomal_bL17"/>
</dbReference>
<dbReference type="InterPro" id="IPR047859">
    <property type="entry name" value="Ribosomal_bL17_CS"/>
</dbReference>
<dbReference type="InterPro" id="IPR036373">
    <property type="entry name" value="Ribosomal_bL17_sf"/>
</dbReference>
<dbReference type="NCBIfam" id="TIGR00059">
    <property type="entry name" value="L17"/>
    <property type="match status" value="1"/>
</dbReference>
<dbReference type="PANTHER" id="PTHR14413:SF16">
    <property type="entry name" value="LARGE RIBOSOMAL SUBUNIT PROTEIN BL17M"/>
    <property type="match status" value="1"/>
</dbReference>
<dbReference type="PANTHER" id="PTHR14413">
    <property type="entry name" value="RIBOSOMAL PROTEIN L17"/>
    <property type="match status" value="1"/>
</dbReference>
<dbReference type="Pfam" id="PF01196">
    <property type="entry name" value="Ribosomal_L17"/>
    <property type="match status" value="1"/>
</dbReference>
<dbReference type="SUPFAM" id="SSF64263">
    <property type="entry name" value="Prokaryotic ribosomal protein L17"/>
    <property type="match status" value="1"/>
</dbReference>
<dbReference type="PROSITE" id="PS01167">
    <property type="entry name" value="RIBOSOMAL_L17"/>
    <property type="match status" value="1"/>
</dbReference>
<keyword id="KW-0687">Ribonucleoprotein</keyword>
<keyword id="KW-0689">Ribosomal protein</keyword>
<reference key="1">
    <citation type="journal article" date="2006" name="Proc. Natl. Acad. Sci. U.S.A.">
        <title>Comparative genomics of the lactic acid bacteria.</title>
        <authorList>
            <person name="Makarova K.S."/>
            <person name="Slesarev A."/>
            <person name="Wolf Y.I."/>
            <person name="Sorokin A."/>
            <person name="Mirkin B."/>
            <person name="Koonin E.V."/>
            <person name="Pavlov A."/>
            <person name="Pavlova N."/>
            <person name="Karamychev V."/>
            <person name="Polouchine N."/>
            <person name="Shakhova V."/>
            <person name="Grigoriev I."/>
            <person name="Lou Y."/>
            <person name="Rohksar D."/>
            <person name="Lucas S."/>
            <person name="Huang K."/>
            <person name="Goodstein D.M."/>
            <person name="Hawkins T."/>
            <person name="Plengvidhya V."/>
            <person name="Welker D."/>
            <person name="Hughes J."/>
            <person name="Goh Y."/>
            <person name="Benson A."/>
            <person name="Baldwin K."/>
            <person name="Lee J.-H."/>
            <person name="Diaz-Muniz I."/>
            <person name="Dosti B."/>
            <person name="Smeianov V."/>
            <person name="Wechter W."/>
            <person name="Barabote R."/>
            <person name="Lorca G."/>
            <person name="Altermann E."/>
            <person name="Barrangou R."/>
            <person name="Ganesan B."/>
            <person name="Xie Y."/>
            <person name="Rawsthorne H."/>
            <person name="Tamir D."/>
            <person name="Parker C."/>
            <person name="Breidt F."/>
            <person name="Broadbent J.R."/>
            <person name="Hutkins R."/>
            <person name="O'Sullivan D."/>
            <person name="Steele J."/>
            <person name="Unlu G."/>
            <person name="Saier M.H. Jr."/>
            <person name="Klaenhammer T."/>
            <person name="Richardson P."/>
            <person name="Kozyavkin S."/>
            <person name="Weimer B.C."/>
            <person name="Mills D.A."/>
        </authorList>
    </citation>
    <scope>NUCLEOTIDE SEQUENCE [LARGE SCALE GENOMIC DNA]</scope>
    <source>
        <strain>ATCC 25745 / CCUG 21536 / LMG 10740 / 183-1w</strain>
    </source>
</reference>
<sequence length="127" mass="14239">MSYRKLGRTSSQRKALLRDLTTELIVNEKIVTTEARAKEVRSTTEKMITLGKRGDLHARRQAAAFVRNVVADVTEDGEDVKVSSALQKLFADLAPRYADRKGGYTRIYKTMPRRGDGAPMVVLELVD</sequence>
<comment type="subunit">
    <text evidence="1">Part of the 50S ribosomal subunit. Contacts protein L32.</text>
</comment>
<comment type="similarity">
    <text evidence="1">Belongs to the bacterial ribosomal protein bL17 family.</text>
</comment>
<protein>
    <recommendedName>
        <fullName evidence="1">Large ribosomal subunit protein bL17</fullName>
    </recommendedName>
    <alternativeName>
        <fullName evidence="2">50S ribosomal protein L17</fullName>
    </alternativeName>
</protein>
<proteinExistence type="inferred from homology"/>
<organism>
    <name type="scientific">Pediococcus pentosaceus (strain ATCC 25745 / CCUG 21536 / LMG 10740 / 183-1w)</name>
    <dbReference type="NCBI Taxonomy" id="278197"/>
    <lineage>
        <taxon>Bacteria</taxon>
        <taxon>Bacillati</taxon>
        <taxon>Bacillota</taxon>
        <taxon>Bacilli</taxon>
        <taxon>Lactobacillales</taxon>
        <taxon>Lactobacillaceae</taxon>
        <taxon>Pediococcus</taxon>
    </lineage>
</organism>
<gene>
    <name evidence="1" type="primary">rplQ</name>
    <name type="ordered locus">PEPE_1391</name>
</gene>
<accession>Q03EE3</accession>